<dbReference type="EC" id="2.5.1.78" evidence="1"/>
<dbReference type="EMBL" id="CP000857">
    <property type="protein sequence ID" value="ACN44612.1"/>
    <property type="molecule type" value="Genomic_DNA"/>
</dbReference>
<dbReference type="SMR" id="C0Q7U2"/>
<dbReference type="KEGG" id="sei:SPC_0429"/>
<dbReference type="HOGENOM" id="CLU_089358_1_1_6"/>
<dbReference type="UniPathway" id="UPA00275">
    <property type="reaction ID" value="UER00404"/>
</dbReference>
<dbReference type="Proteomes" id="UP000001599">
    <property type="component" value="Chromosome"/>
</dbReference>
<dbReference type="GO" id="GO:0005829">
    <property type="term" value="C:cytosol"/>
    <property type="evidence" value="ECO:0007669"/>
    <property type="project" value="TreeGrafter"/>
</dbReference>
<dbReference type="GO" id="GO:0009349">
    <property type="term" value="C:riboflavin synthase complex"/>
    <property type="evidence" value="ECO:0007669"/>
    <property type="project" value="InterPro"/>
</dbReference>
<dbReference type="GO" id="GO:0000906">
    <property type="term" value="F:6,7-dimethyl-8-ribityllumazine synthase activity"/>
    <property type="evidence" value="ECO:0007669"/>
    <property type="project" value="UniProtKB-UniRule"/>
</dbReference>
<dbReference type="GO" id="GO:0009231">
    <property type="term" value="P:riboflavin biosynthetic process"/>
    <property type="evidence" value="ECO:0007669"/>
    <property type="project" value="UniProtKB-UniRule"/>
</dbReference>
<dbReference type="CDD" id="cd09209">
    <property type="entry name" value="Lumazine_synthase-I"/>
    <property type="match status" value="1"/>
</dbReference>
<dbReference type="FunFam" id="3.40.50.960:FF:000001">
    <property type="entry name" value="6,7-dimethyl-8-ribityllumazine synthase"/>
    <property type="match status" value="1"/>
</dbReference>
<dbReference type="Gene3D" id="3.40.50.960">
    <property type="entry name" value="Lumazine/riboflavin synthase"/>
    <property type="match status" value="1"/>
</dbReference>
<dbReference type="HAMAP" id="MF_00178">
    <property type="entry name" value="Lumazine_synth"/>
    <property type="match status" value="1"/>
</dbReference>
<dbReference type="InterPro" id="IPR034964">
    <property type="entry name" value="LS"/>
</dbReference>
<dbReference type="InterPro" id="IPR002180">
    <property type="entry name" value="LS/RS"/>
</dbReference>
<dbReference type="InterPro" id="IPR036467">
    <property type="entry name" value="LS/RS_sf"/>
</dbReference>
<dbReference type="NCBIfam" id="TIGR00114">
    <property type="entry name" value="lumazine-synth"/>
    <property type="match status" value="1"/>
</dbReference>
<dbReference type="NCBIfam" id="NF000812">
    <property type="entry name" value="PRK00061.1-4"/>
    <property type="match status" value="1"/>
</dbReference>
<dbReference type="PANTHER" id="PTHR21058:SF0">
    <property type="entry name" value="6,7-DIMETHYL-8-RIBITYLLUMAZINE SYNTHASE"/>
    <property type="match status" value="1"/>
</dbReference>
<dbReference type="PANTHER" id="PTHR21058">
    <property type="entry name" value="6,7-DIMETHYL-8-RIBITYLLUMAZINE SYNTHASE DMRL SYNTHASE LUMAZINE SYNTHASE"/>
    <property type="match status" value="1"/>
</dbReference>
<dbReference type="Pfam" id="PF00885">
    <property type="entry name" value="DMRL_synthase"/>
    <property type="match status" value="1"/>
</dbReference>
<dbReference type="SUPFAM" id="SSF52121">
    <property type="entry name" value="Lumazine synthase"/>
    <property type="match status" value="1"/>
</dbReference>
<comment type="function">
    <text evidence="1">Catalyzes the formation of 6,7-dimethyl-8-ribityllumazine by condensation of 5-amino-6-(D-ribitylamino)uracil with 3,4-dihydroxy-2-butanone 4-phosphate. This is the penultimate step in the biosynthesis of riboflavin.</text>
</comment>
<comment type="catalytic activity">
    <reaction evidence="1">
        <text>(2S)-2-hydroxy-3-oxobutyl phosphate + 5-amino-6-(D-ribitylamino)uracil = 6,7-dimethyl-8-(1-D-ribityl)lumazine + phosphate + 2 H2O + H(+)</text>
        <dbReference type="Rhea" id="RHEA:26152"/>
        <dbReference type="ChEBI" id="CHEBI:15377"/>
        <dbReference type="ChEBI" id="CHEBI:15378"/>
        <dbReference type="ChEBI" id="CHEBI:15934"/>
        <dbReference type="ChEBI" id="CHEBI:43474"/>
        <dbReference type="ChEBI" id="CHEBI:58201"/>
        <dbReference type="ChEBI" id="CHEBI:58830"/>
        <dbReference type="EC" id="2.5.1.78"/>
    </reaction>
</comment>
<comment type="pathway">
    <text evidence="1">Cofactor biosynthesis; riboflavin biosynthesis; riboflavin from 2-hydroxy-3-oxobutyl phosphate and 5-amino-6-(D-ribitylamino)uracil: step 1/2.</text>
</comment>
<comment type="subunit">
    <text evidence="1">Forms an icosahedral capsid composed of 60 subunits, arranged as a dodecamer of pentamers.</text>
</comment>
<comment type="similarity">
    <text evidence="1">Belongs to the DMRL synthase family.</text>
</comment>
<protein>
    <recommendedName>
        <fullName evidence="1">6,7-dimethyl-8-ribityllumazine synthase</fullName>
        <shortName evidence="1">DMRL synthase</shortName>
        <shortName evidence="1">LS</shortName>
        <shortName evidence="1">Lumazine synthase</shortName>
        <ecNumber evidence="1">2.5.1.78</ecNumber>
    </recommendedName>
</protein>
<proteinExistence type="inferred from homology"/>
<evidence type="ECO:0000255" key="1">
    <source>
        <dbReference type="HAMAP-Rule" id="MF_00178"/>
    </source>
</evidence>
<accession>C0Q7U2</accession>
<sequence>MNIIKANVAAPDARVAITIARFNQFINDSLLDGAVDALTRIGQVKDDNITVVWVPGAYELPLATEALAKSGKYDAVVALGTVIRGGTAHFEYVAGGASNGLASVAQDSGVPVAFGVLTTESIEQAIERAGTKAGNKGAEAALTALEMINVLKAIKA</sequence>
<organism>
    <name type="scientific">Salmonella paratyphi C (strain RKS4594)</name>
    <dbReference type="NCBI Taxonomy" id="476213"/>
    <lineage>
        <taxon>Bacteria</taxon>
        <taxon>Pseudomonadati</taxon>
        <taxon>Pseudomonadota</taxon>
        <taxon>Gammaproteobacteria</taxon>
        <taxon>Enterobacterales</taxon>
        <taxon>Enterobacteriaceae</taxon>
        <taxon>Salmonella</taxon>
    </lineage>
</organism>
<name>RISB_SALPC</name>
<reference key="1">
    <citation type="journal article" date="2009" name="PLoS ONE">
        <title>Salmonella paratyphi C: genetic divergence from Salmonella choleraesuis and pathogenic convergence with Salmonella typhi.</title>
        <authorList>
            <person name="Liu W.-Q."/>
            <person name="Feng Y."/>
            <person name="Wang Y."/>
            <person name="Zou Q.-H."/>
            <person name="Chen F."/>
            <person name="Guo J.-T."/>
            <person name="Peng Y.-H."/>
            <person name="Jin Y."/>
            <person name="Li Y.-G."/>
            <person name="Hu S.-N."/>
            <person name="Johnston R.N."/>
            <person name="Liu G.-R."/>
            <person name="Liu S.-L."/>
        </authorList>
    </citation>
    <scope>NUCLEOTIDE SEQUENCE [LARGE SCALE GENOMIC DNA]</scope>
    <source>
        <strain>RKS4594</strain>
    </source>
</reference>
<keyword id="KW-0686">Riboflavin biosynthesis</keyword>
<keyword id="KW-0808">Transferase</keyword>
<feature type="chain" id="PRO_1000195508" description="6,7-dimethyl-8-ribityllumazine synthase">
    <location>
        <begin position="1"/>
        <end position="156"/>
    </location>
</feature>
<feature type="active site" description="Proton donor" evidence="1">
    <location>
        <position position="89"/>
    </location>
</feature>
<feature type="binding site" evidence="1">
    <location>
        <position position="22"/>
    </location>
    <ligand>
        <name>5-amino-6-(D-ribitylamino)uracil</name>
        <dbReference type="ChEBI" id="CHEBI:15934"/>
    </ligand>
</feature>
<feature type="binding site" evidence="1">
    <location>
        <begin position="57"/>
        <end position="59"/>
    </location>
    <ligand>
        <name>5-amino-6-(D-ribitylamino)uracil</name>
        <dbReference type="ChEBI" id="CHEBI:15934"/>
    </ligand>
</feature>
<feature type="binding site" evidence="1">
    <location>
        <begin position="81"/>
        <end position="83"/>
    </location>
    <ligand>
        <name>5-amino-6-(D-ribitylamino)uracil</name>
        <dbReference type="ChEBI" id="CHEBI:15934"/>
    </ligand>
</feature>
<feature type="binding site" evidence="1">
    <location>
        <begin position="86"/>
        <end position="87"/>
    </location>
    <ligand>
        <name>(2S)-2-hydroxy-3-oxobutyl phosphate</name>
        <dbReference type="ChEBI" id="CHEBI:58830"/>
    </ligand>
</feature>
<feature type="binding site" evidence="1">
    <location>
        <position position="114"/>
    </location>
    <ligand>
        <name>5-amino-6-(D-ribitylamino)uracil</name>
        <dbReference type="ChEBI" id="CHEBI:15934"/>
    </ligand>
</feature>
<feature type="binding site" evidence="1">
    <location>
        <position position="128"/>
    </location>
    <ligand>
        <name>(2S)-2-hydroxy-3-oxobutyl phosphate</name>
        <dbReference type="ChEBI" id="CHEBI:58830"/>
    </ligand>
</feature>
<gene>
    <name evidence="1" type="primary">ribH</name>
    <name type="ordered locus">SPC_0429</name>
</gene>